<comment type="function">
    <text evidence="1">Catalyzes the NADPH-dependent reduction of 7-cyano-7-deazaguanine (preQ0) to 7-aminomethyl-7-deazaguanine (preQ1).</text>
</comment>
<comment type="catalytic activity">
    <reaction evidence="1">
        <text>7-aminomethyl-7-carbaguanine + 2 NADP(+) = 7-cyano-7-deazaguanine + 2 NADPH + 3 H(+)</text>
        <dbReference type="Rhea" id="RHEA:13409"/>
        <dbReference type="ChEBI" id="CHEBI:15378"/>
        <dbReference type="ChEBI" id="CHEBI:45075"/>
        <dbReference type="ChEBI" id="CHEBI:57783"/>
        <dbReference type="ChEBI" id="CHEBI:58349"/>
        <dbReference type="ChEBI" id="CHEBI:58703"/>
        <dbReference type="EC" id="1.7.1.13"/>
    </reaction>
</comment>
<comment type="pathway">
    <text evidence="1">tRNA modification; tRNA-queuosine biosynthesis.</text>
</comment>
<comment type="subunit">
    <text evidence="1">Homodimer.</text>
</comment>
<comment type="subcellular location">
    <subcellularLocation>
        <location evidence="1">Cytoplasm</location>
    </subcellularLocation>
</comment>
<comment type="similarity">
    <text evidence="1">Belongs to the GTP cyclohydrolase I family. QueF type 2 subfamily.</text>
</comment>
<organism>
    <name type="scientific">Ectopseudomonas mendocina (strain ymp)</name>
    <name type="common">Pseudomonas mendocina</name>
    <dbReference type="NCBI Taxonomy" id="399739"/>
    <lineage>
        <taxon>Bacteria</taxon>
        <taxon>Pseudomonadati</taxon>
        <taxon>Pseudomonadota</taxon>
        <taxon>Gammaproteobacteria</taxon>
        <taxon>Pseudomonadales</taxon>
        <taxon>Pseudomonadaceae</taxon>
        <taxon>Ectopseudomonas</taxon>
    </lineage>
</organism>
<name>QUEF_ECTM1</name>
<evidence type="ECO:0000255" key="1">
    <source>
        <dbReference type="HAMAP-Rule" id="MF_00817"/>
    </source>
</evidence>
<dbReference type="EC" id="1.7.1.13" evidence="1"/>
<dbReference type="EMBL" id="CP000680">
    <property type="protein sequence ID" value="ABP84685.1"/>
    <property type="molecule type" value="Genomic_DNA"/>
</dbReference>
<dbReference type="SMR" id="A4XTL9"/>
<dbReference type="STRING" id="399739.Pmen_1923"/>
<dbReference type="KEGG" id="pmy:Pmen_1923"/>
<dbReference type="PATRIC" id="fig|399739.8.peg.1947"/>
<dbReference type="eggNOG" id="COG0780">
    <property type="taxonomic scope" value="Bacteria"/>
</dbReference>
<dbReference type="eggNOG" id="COG2904">
    <property type="taxonomic scope" value="Bacteria"/>
</dbReference>
<dbReference type="HOGENOM" id="CLU_054738_0_0_6"/>
<dbReference type="OrthoDB" id="9789995at2"/>
<dbReference type="UniPathway" id="UPA00392"/>
<dbReference type="GO" id="GO:0005737">
    <property type="term" value="C:cytoplasm"/>
    <property type="evidence" value="ECO:0007669"/>
    <property type="project" value="UniProtKB-SubCell"/>
</dbReference>
<dbReference type="GO" id="GO:0033739">
    <property type="term" value="F:preQ1 synthase activity"/>
    <property type="evidence" value="ECO:0007669"/>
    <property type="project" value="UniProtKB-UniRule"/>
</dbReference>
<dbReference type="GO" id="GO:0008616">
    <property type="term" value="P:queuosine biosynthetic process"/>
    <property type="evidence" value="ECO:0007669"/>
    <property type="project" value="UniProtKB-UniRule"/>
</dbReference>
<dbReference type="GO" id="GO:0006400">
    <property type="term" value="P:tRNA modification"/>
    <property type="evidence" value="ECO:0007669"/>
    <property type="project" value="UniProtKB-UniRule"/>
</dbReference>
<dbReference type="Gene3D" id="3.30.1130.10">
    <property type="match status" value="2"/>
</dbReference>
<dbReference type="HAMAP" id="MF_00817">
    <property type="entry name" value="QueF_type2"/>
    <property type="match status" value="1"/>
</dbReference>
<dbReference type="InterPro" id="IPR043133">
    <property type="entry name" value="GTP-CH-I_C/QueF"/>
</dbReference>
<dbReference type="InterPro" id="IPR050084">
    <property type="entry name" value="NADPH_dep_7-cyano-7-deazaG_red"/>
</dbReference>
<dbReference type="InterPro" id="IPR029500">
    <property type="entry name" value="QueF"/>
</dbReference>
<dbReference type="InterPro" id="IPR029139">
    <property type="entry name" value="QueF_N"/>
</dbReference>
<dbReference type="InterPro" id="IPR016428">
    <property type="entry name" value="QueF_type2"/>
</dbReference>
<dbReference type="NCBIfam" id="TIGR03138">
    <property type="entry name" value="QueF"/>
    <property type="match status" value="1"/>
</dbReference>
<dbReference type="PANTHER" id="PTHR34354">
    <property type="entry name" value="NADPH-DEPENDENT 7-CYANO-7-DEAZAGUANINE REDUCTASE"/>
    <property type="match status" value="1"/>
</dbReference>
<dbReference type="PANTHER" id="PTHR34354:SF1">
    <property type="entry name" value="NADPH-DEPENDENT 7-CYANO-7-DEAZAGUANINE REDUCTASE"/>
    <property type="match status" value="1"/>
</dbReference>
<dbReference type="Pfam" id="PF14489">
    <property type="entry name" value="QueF"/>
    <property type="match status" value="1"/>
</dbReference>
<dbReference type="Pfam" id="PF14819">
    <property type="entry name" value="QueF_N"/>
    <property type="match status" value="1"/>
</dbReference>
<dbReference type="PIRSF" id="PIRSF004750">
    <property type="entry name" value="Nitrile_oxidored_YqcD_prd"/>
    <property type="match status" value="1"/>
</dbReference>
<dbReference type="SUPFAM" id="SSF55620">
    <property type="entry name" value="Tetrahydrobiopterin biosynthesis enzymes-like"/>
    <property type="match status" value="1"/>
</dbReference>
<reference key="1">
    <citation type="submission" date="2007-04" db="EMBL/GenBank/DDBJ databases">
        <title>Complete sequence of Pseudomonas mendocina ymp.</title>
        <authorList>
            <consortium name="US DOE Joint Genome Institute"/>
            <person name="Copeland A."/>
            <person name="Lucas S."/>
            <person name="Lapidus A."/>
            <person name="Barry K."/>
            <person name="Glavina del Rio T."/>
            <person name="Dalin E."/>
            <person name="Tice H."/>
            <person name="Pitluck S."/>
            <person name="Kiss H."/>
            <person name="Brettin T."/>
            <person name="Detter J.C."/>
            <person name="Bruce D."/>
            <person name="Han C."/>
            <person name="Schmutz J."/>
            <person name="Larimer F."/>
            <person name="Land M."/>
            <person name="Hauser L."/>
            <person name="Kyrpides N."/>
            <person name="Mikhailova N."/>
            <person name="Hersman L."/>
            <person name="Dubois J."/>
            <person name="Maurice P."/>
            <person name="Richardson P."/>
        </authorList>
    </citation>
    <scope>NUCLEOTIDE SEQUENCE [LARGE SCALE GENOMIC DNA]</scope>
    <source>
        <strain>ymp</strain>
    </source>
</reference>
<sequence length="276" mass="30730">MQHPAEHSPLGKSSQYIAEYSPELLFPISRTSKWAELGLDGANLPYQGVDYWNCYELSWLLPSGKPVVAIGEFAIPADSPNIIESKSFKLYLNSLNQTVFASWGELQATLARDLSAVAGKPVAVRLRSLTEVAGEGVATLPGQCIDELEISVTQYAHPQPELLRCDASRVVEESLHSHLLKSNCPVTGQPDWGSLVVQYRGAALDHASLLAYLVSFRQHADFHEQCVERIFLDLQRLLQPQSLTVYARYVRRGGLDINPYRSTEALRVDNARLVRQ</sequence>
<accession>A4XTL9</accession>
<protein>
    <recommendedName>
        <fullName evidence="1">NADPH-dependent 7-cyano-7-deazaguanine reductase</fullName>
        <ecNumber evidence="1">1.7.1.13</ecNumber>
    </recommendedName>
    <alternativeName>
        <fullName evidence="1">7-cyano-7-carbaguanine reductase</fullName>
    </alternativeName>
    <alternativeName>
        <fullName evidence="1">NADPH-dependent nitrile oxidoreductase</fullName>
    </alternativeName>
    <alternativeName>
        <fullName evidence="1">PreQ(0) reductase</fullName>
    </alternativeName>
</protein>
<gene>
    <name evidence="1" type="primary">queF</name>
    <name type="ordered locus">Pmen_1923</name>
</gene>
<proteinExistence type="inferred from homology"/>
<feature type="chain" id="PRO_1000062353" description="NADPH-dependent 7-cyano-7-deazaguanine reductase">
    <location>
        <begin position="1"/>
        <end position="276"/>
    </location>
</feature>
<feature type="active site" description="Thioimide intermediate" evidence="1">
    <location>
        <position position="184"/>
    </location>
</feature>
<feature type="active site" description="Proton donor" evidence="1">
    <location>
        <position position="191"/>
    </location>
</feature>
<feature type="binding site" evidence="1">
    <location>
        <begin position="83"/>
        <end position="85"/>
    </location>
    <ligand>
        <name>substrate</name>
    </ligand>
</feature>
<feature type="binding site" evidence="1">
    <location>
        <begin position="85"/>
        <end position="86"/>
    </location>
    <ligand>
        <name>NADPH</name>
        <dbReference type="ChEBI" id="CHEBI:57783"/>
    </ligand>
</feature>
<feature type="binding site" evidence="1">
    <location>
        <begin position="223"/>
        <end position="224"/>
    </location>
    <ligand>
        <name>substrate</name>
    </ligand>
</feature>
<feature type="binding site" evidence="1">
    <location>
        <begin position="252"/>
        <end position="253"/>
    </location>
    <ligand>
        <name>NADPH</name>
        <dbReference type="ChEBI" id="CHEBI:57783"/>
    </ligand>
</feature>
<keyword id="KW-0963">Cytoplasm</keyword>
<keyword id="KW-0521">NADP</keyword>
<keyword id="KW-0560">Oxidoreductase</keyword>
<keyword id="KW-0671">Queuosine biosynthesis</keyword>